<name>RPPH_SALPB</name>
<organism>
    <name type="scientific">Salmonella paratyphi B (strain ATCC BAA-1250 / SPB7)</name>
    <dbReference type="NCBI Taxonomy" id="1016998"/>
    <lineage>
        <taxon>Bacteria</taxon>
        <taxon>Pseudomonadati</taxon>
        <taxon>Pseudomonadota</taxon>
        <taxon>Gammaproteobacteria</taxon>
        <taxon>Enterobacterales</taxon>
        <taxon>Enterobacteriaceae</taxon>
        <taxon>Salmonella</taxon>
    </lineage>
</organism>
<feature type="chain" id="PRO_1000078975" description="RNA pyrophosphohydrolase">
    <location>
        <begin position="1"/>
        <end position="176"/>
    </location>
</feature>
<feature type="domain" description="Nudix hydrolase" evidence="1">
    <location>
        <begin position="6"/>
        <end position="149"/>
    </location>
</feature>
<feature type="short sequence motif" description="Nudix box">
    <location>
        <begin position="38"/>
        <end position="59"/>
    </location>
</feature>
<reference key="1">
    <citation type="submission" date="2007-11" db="EMBL/GenBank/DDBJ databases">
        <authorList>
            <consortium name="The Salmonella enterica serovar Paratyphi B Genome Sequencing Project"/>
            <person name="McClelland M."/>
            <person name="Sanderson E.K."/>
            <person name="Porwollik S."/>
            <person name="Spieth J."/>
            <person name="Clifton W.S."/>
            <person name="Fulton R."/>
            <person name="Cordes M."/>
            <person name="Wollam A."/>
            <person name="Shah N."/>
            <person name="Pepin K."/>
            <person name="Bhonagiri V."/>
            <person name="Nash W."/>
            <person name="Johnson M."/>
            <person name="Thiruvilangam P."/>
            <person name="Wilson R."/>
        </authorList>
    </citation>
    <scope>NUCLEOTIDE SEQUENCE [LARGE SCALE GENOMIC DNA]</scope>
    <source>
        <strain>ATCC BAA-1250 / SPB7</strain>
    </source>
</reference>
<protein>
    <recommendedName>
        <fullName evidence="1">RNA pyrophosphohydrolase</fullName>
        <ecNumber evidence="1">3.6.1.-</ecNumber>
    </recommendedName>
    <alternativeName>
        <fullName evidence="1">(Di)nucleoside polyphosphate hydrolase</fullName>
    </alternativeName>
</protein>
<dbReference type="EC" id="3.6.1.-" evidence="1"/>
<dbReference type="EMBL" id="CP000886">
    <property type="protein sequence ID" value="ABX69072.1"/>
    <property type="molecule type" value="Genomic_DNA"/>
</dbReference>
<dbReference type="RefSeq" id="WP_000564481.1">
    <property type="nucleotide sequence ID" value="NC_010102.1"/>
</dbReference>
<dbReference type="BMRB" id="A9N2M1"/>
<dbReference type="SMR" id="A9N2M1"/>
<dbReference type="KEGG" id="spq:SPAB_03737"/>
<dbReference type="PATRIC" id="fig|1016998.12.peg.3518"/>
<dbReference type="HOGENOM" id="CLU_087195_3_2_6"/>
<dbReference type="BioCyc" id="SENT1016998:SPAB_RS15220-MONOMER"/>
<dbReference type="Proteomes" id="UP000008556">
    <property type="component" value="Chromosome"/>
</dbReference>
<dbReference type="GO" id="GO:0005737">
    <property type="term" value="C:cytoplasm"/>
    <property type="evidence" value="ECO:0007669"/>
    <property type="project" value="TreeGrafter"/>
</dbReference>
<dbReference type="GO" id="GO:0034353">
    <property type="term" value="F:mRNA 5'-diphosphatase activity"/>
    <property type="evidence" value="ECO:0007669"/>
    <property type="project" value="TreeGrafter"/>
</dbReference>
<dbReference type="GO" id="GO:0006402">
    <property type="term" value="P:mRNA catabolic process"/>
    <property type="evidence" value="ECO:0007669"/>
    <property type="project" value="TreeGrafter"/>
</dbReference>
<dbReference type="CDD" id="cd03671">
    <property type="entry name" value="NUDIX_Ap4A_hydrolase_plant_like"/>
    <property type="match status" value="1"/>
</dbReference>
<dbReference type="FunFam" id="3.90.79.10:FF:000001">
    <property type="entry name" value="RNA pyrophosphohydrolase"/>
    <property type="match status" value="1"/>
</dbReference>
<dbReference type="Gene3D" id="3.90.79.10">
    <property type="entry name" value="Nucleoside Triphosphate Pyrophosphohydrolase"/>
    <property type="match status" value="1"/>
</dbReference>
<dbReference type="HAMAP" id="MF_00298">
    <property type="entry name" value="Nudix_RppH"/>
    <property type="match status" value="1"/>
</dbReference>
<dbReference type="InterPro" id="IPR020476">
    <property type="entry name" value="Nudix_hydrolase"/>
</dbReference>
<dbReference type="InterPro" id="IPR015797">
    <property type="entry name" value="NUDIX_hydrolase-like_dom_sf"/>
</dbReference>
<dbReference type="InterPro" id="IPR020084">
    <property type="entry name" value="NUDIX_hydrolase_CS"/>
</dbReference>
<dbReference type="InterPro" id="IPR000086">
    <property type="entry name" value="NUDIX_hydrolase_dom"/>
</dbReference>
<dbReference type="InterPro" id="IPR022927">
    <property type="entry name" value="RppH"/>
</dbReference>
<dbReference type="NCBIfam" id="NF001934">
    <property type="entry name" value="PRK00714.1-1"/>
    <property type="match status" value="1"/>
</dbReference>
<dbReference type="NCBIfam" id="NF001937">
    <property type="entry name" value="PRK00714.1-4"/>
    <property type="match status" value="1"/>
</dbReference>
<dbReference type="NCBIfam" id="NF001938">
    <property type="entry name" value="PRK00714.1-5"/>
    <property type="match status" value="1"/>
</dbReference>
<dbReference type="PANTHER" id="PTHR23114">
    <property type="entry name" value="M7GPPPN-MRNA HYDROLASE"/>
    <property type="match status" value="1"/>
</dbReference>
<dbReference type="PANTHER" id="PTHR23114:SF17">
    <property type="entry name" value="M7GPPPN-MRNA HYDROLASE"/>
    <property type="match status" value="1"/>
</dbReference>
<dbReference type="Pfam" id="PF00293">
    <property type="entry name" value="NUDIX"/>
    <property type="match status" value="1"/>
</dbReference>
<dbReference type="PRINTS" id="PR00502">
    <property type="entry name" value="NUDIXFAMILY"/>
</dbReference>
<dbReference type="SUPFAM" id="SSF55811">
    <property type="entry name" value="Nudix"/>
    <property type="match status" value="1"/>
</dbReference>
<dbReference type="PROSITE" id="PS51462">
    <property type="entry name" value="NUDIX"/>
    <property type="match status" value="1"/>
</dbReference>
<dbReference type="PROSITE" id="PS00893">
    <property type="entry name" value="NUDIX_BOX"/>
    <property type="match status" value="1"/>
</dbReference>
<evidence type="ECO:0000255" key="1">
    <source>
        <dbReference type="HAMAP-Rule" id="MF_00298"/>
    </source>
</evidence>
<gene>
    <name evidence="1" type="primary">rppH</name>
    <name evidence="1" type="synonym">nudH</name>
    <name type="ordered locus">SPAB_03737</name>
</gene>
<sequence>MIDDDGYRPNVGIVICNRQGQVMWARRFGQHSWQFPQGGINPGESAEQAMYRELFEEVGLSRKDVRILASTRNWLRYKLPKRLVRWDTKPVCIGQKQKWFLLQLMSADAEINMQTSSTPEFDGWRWVSYWYPVRQVVSFKRDVYRRVMKEFASVVMALQDNPPKLQSAPAYRRKRG</sequence>
<accession>A9N2M1</accession>
<proteinExistence type="inferred from homology"/>
<keyword id="KW-0378">Hydrolase</keyword>
<comment type="function">
    <text evidence="1">Accelerates the degradation of transcripts by removing pyrophosphate from the 5'-end of triphosphorylated RNA, leading to a more labile monophosphorylated state that can stimulate subsequent ribonuclease cleavage.</text>
</comment>
<comment type="cofactor">
    <cofactor evidence="1">
        <name>a divalent metal cation</name>
        <dbReference type="ChEBI" id="CHEBI:60240"/>
    </cofactor>
</comment>
<comment type="similarity">
    <text evidence="1">Belongs to the Nudix hydrolase family. RppH subfamily.</text>
</comment>